<accession>B7HL30</accession>
<comment type="similarity">
    <text evidence="1">Belongs to the UPF0302 family.</text>
</comment>
<organism>
    <name type="scientific">Bacillus cereus (strain AH187)</name>
    <dbReference type="NCBI Taxonomy" id="405534"/>
    <lineage>
        <taxon>Bacteria</taxon>
        <taxon>Bacillati</taxon>
        <taxon>Bacillota</taxon>
        <taxon>Bacilli</taxon>
        <taxon>Bacillales</taxon>
        <taxon>Bacillaceae</taxon>
        <taxon>Bacillus</taxon>
        <taxon>Bacillus cereus group</taxon>
    </lineage>
</organism>
<sequence>MNTPVSVNEKKDFVKWFLNNYQLKQRECVWILNYLMSHDQLMHKVHFVEHAKYCPRGLVMSANCVKDTPFHFFKQNVMTTDAEKSFHDIRLNRDEDIYIQLNFKSSFQNANYVAVLEENPYLPKHIEVNEKDRLLAERFLEESVFSFRRERLLKQIDEALDKQDKEAFHRLTAELKML</sequence>
<reference key="1">
    <citation type="submission" date="2008-10" db="EMBL/GenBank/DDBJ databases">
        <title>Genome sequence of Bacillus cereus AH187.</title>
        <authorList>
            <person name="Dodson R.J."/>
            <person name="Durkin A.S."/>
            <person name="Rosovitz M.J."/>
            <person name="Rasko D.A."/>
            <person name="Kolsto A.B."/>
            <person name="Okstad O.A."/>
            <person name="Ravel J."/>
            <person name="Sutton G."/>
        </authorList>
    </citation>
    <scope>NUCLEOTIDE SEQUENCE [LARGE SCALE GENOMIC DNA]</scope>
    <source>
        <strain>AH187</strain>
    </source>
</reference>
<protein>
    <recommendedName>
        <fullName evidence="1">UPF0302 protein BCAH187_A1683</fullName>
    </recommendedName>
</protein>
<name>Y1683_BACC7</name>
<gene>
    <name type="ordered locus">BCAH187_A1683</name>
</gene>
<feature type="chain" id="PRO_1000198313" description="UPF0302 protein BCAH187_A1683">
    <location>
        <begin position="1"/>
        <end position="178"/>
    </location>
</feature>
<proteinExistence type="inferred from homology"/>
<evidence type="ECO:0000255" key="1">
    <source>
        <dbReference type="HAMAP-Rule" id="MF_00760"/>
    </source>
</evidence>
<dbReference type="EMBL" id="CP001177">
    <property type="protein sequence ID" value="ACJ81880.1"/>
    <property type="molecule type" value="Genomic_DNA"/>
</dbReference>
<dbReference type="SMR" id="B7HL30"/>
<dbReference type="KEGG" id="bcr:BCAH187_A1683"/>
<dbReference type="HOGENOM" id="CLU_126019_0_0_9"/>
<dbReference type="Proteomes" id="UP000002214">
    <property type="component" value="Chromosome"/>
</dbReference>
<dbReference type="Gene3D" id="3.40.1530.30">
    <property type="entry name" value="Uncharacterised family UPF0302, N-terminal domain"/>
    <property type="match status" value="1"/>
</dbReference>
<dbReference type="Gene3D" id="4.10.810.10">
    <property type="entry name" value="Virus Scaffolding Protein, Chain A"/>
    <property type="match status" value="1"/>
</dbReference>
<dbReference type="HAMAP" id="MF_00760">
    <property type="entry name" value="UPF0302"/>
    <property type="match status" value="1"/>
</dbReference>
<dbReference type="InterPro" id="IPR014957">
    <property type="entry name" value="IDEAL_dom"/>
</dbReference>
<dbReference type="InterPro" id="IPR011188">
    <property type="entry name" value="UPF0302"/>
</dbReference>
<dbReference type="InterPro" id="IPR014963">
    <property type="entry name" value="UPF0302_N"/>
</dbReference>
<dbReference type="InterPro" id="IPR038091">
    <property type="entry name" value="UPF0302_N_sf"/>
</dbReference>
<dbReference type="InterPro" id="IPR027393">
    <property type="entry name" value="Virus_scaffolding_prot_C"/>
</dbReference>
<dbReference type="NCBIfam" id="NF002965">
    <property type="entry name" value="PRK03636.1"/>
    <property type="match status" value="1"/>
</dbReference>
<dbReference type="Pfam" id="PF08858">
    <property type="entry name" value="IDEAL"/>
    <property type="match status" value="1"/>
</dbReference>
<dbReference type="Pfam" id="PF08864">
    <property type="entry name" value="UPF0302"/>
    <property type="match status" value="1"/>
</dbReference>
<dbReference type="PIRSF" id="PIRSF007165">
    <property type="entry name" value="UCP007165"/>
    <property type="match status" value="1"/>
</dbReference>
<dbReference type="SMART" id="SM00914">
    <property type="entry name" value="IDEAL"/>
    <property type="match status" value="1"/>
</dbReference>